<sequence length="217" mass="22982">MKKIGVILSGCGVYDGSEIHEAVLTLLAISRSGAQAVCFAPDKQQVDVINHLTGEAMTETRNVLIEAARITRGEIRPLAQADAAELDALIVPGGFGAAKNLSNFASLGSECTVDRELKALAQAMHQAGKPLGFMCIAPAMLPKIFDFPLRLTIGTDIDTAEVLEEMGAEHVPCPVDDIVVDEDNKIVTTPAYMLAQNIAEAASGIDKLVSRVLVLAE</sequence>
<gene>
    <name type="primary">elbB</name>
    <name type="ordered locus">SF3249</name>
    <name type="ordered locus">S3467</name>
</gene>
<evidence type="ECO:0000250" key="1">
    <source>
        <dbReference type="UniProtKB" id="P0ABU5"/>
    </source>
</evidence>
<evidence type="ECO:0000250" key="2">
    <source>
        <dbReference type="UniProtKB" id="P31658"/>
    </source>
</evidence>
<evidence type="ECO:0000305" key="3"/>
<accession>P0ABU6</accession>
<accession>P26428</accession>
<accession>P76673</accession>
<protein>
    <recommendedName>
        <fullName evidence="1">Glyoxalase ElbB</fullName>
        <ecNumber evidence="1">4.2.1.-</ecNumber>
    </recommendedName>
</protein>
<comment type="function">
    <text evidence="1">Displays glyoxalase activity, catalyzing the conversion of glyoxal to glycolate. However, this apparent glyoxalase activity may reflect a deglycase activity, which could be the primary function of this protein like other DJ-1 superfamily members such as PARK7, YajL, YhbO and HchA. Is not able to use methylglyoxal as substrate.</text>
</comment>
<comment type="catalytic activity">
    <reaction evidence="1">
        <text>glyoxal + H2O = glycolate + H(+)</text>
        <dbReference type="Rhea" id="RHEA:51672"/>
        <dbReference type="ChEBI" id="CHEBI:15377"/>
        <dbReference type="ChEBI" id="CHEBI:15378"/>
        <dbReference type="ChEBI" id="CHEBI:29805"/>
        <dbReference type="ChEBI" id="CHEBI:34779"/>
    </reaction>
</comment>
<comment type="subunit">
    <text evidence="1">Homodimer.</text>
</comment>
<comment type="similarity">
    <text evidence="3">Belongs to the peptidase C56 family.</text>
</comment>
<name>ELBB_SHIFL</name>
<feature type="chain" id="PRO_0000201682" description="Glyoxalase ElbB">
    <location>
        <begin position="1"/>
        <end position="217"/>
    </location>
</feature>
<feature type="active site" description="Nucleophile" evidence="2">
    <location>
        <position position="135"/>
    </location>
</feature>
<proteinExistence type="inferred from homology"/>
<reference key="1">
    <citation type="journal article" date="2002" name="Nucleic Acids Res.">
        <title>Genome sequence of Shigella flexneri 2a: insights into pathogenicity through comparison with genomes of Escherichia coli K12 and O157.</title>
        <authorList>
            <person name="Jin Q."/>
            <person name="Yuan Z."/>
            <person name="Xu J."/>
            <person name="Wang Y."/>
            <person name="Shen Y."/>
            <person name="Lu W."/>
            <person name="Wang J."/>
            <person name="Liu H."/>
            <person name="Yang J."/>
            <person name="Yang F."/>
            <person name="Zhang X."/>
            <person name="Zhang J."/>
            <person name="Yang G."/>
            <person name="Wu H."/>
            <person name="Qu D."/>
            <person name="Dong J."/>
            <person name="Sun L."/>
            <person name="Xue Y."/>
            <person name="Zhao A."/>
            <person name="Gao Y."/>
            <person name="Zhu J."/>
            <person name="Kan B."/>
            <person name="Ding K."/>
            <person name="Chen S."/>
            <person name="Cheng H."/>
            <person name="Yao Z."/>
            <person name="He B."/>
            <person name="Chen R."/>
            <person name="Ma D."/>
            <person name="Qiang B."/>
            <person name="Wen Y."/>
            <person name="Hou Y."/>
            <person name="Yu J."/>
        </authorList>
    </citation>
    <scope>NUCLEOTIDE SEQUENCE [LARGE SCALE GENOMIC DNA]</scope>
    <source>
        <strain>301 / Serotype 2a</strain>
    </source>
</reference>
<reference key="2">
    <citation type="journal article" date="2003" name="Infect. Immun.">
        <title>Complete genome sequence and comparative genomics of Shigella flexneri serotype 2a strain 2457T.</title>
        <authorList>
            <person name="Wei J."/>
            <person name="Goldberg M.B."/>
            <person name="Burland V."/>
            <person name="Venkatesan M.M."/>
            <person name="Deng W."/>
            <person name="Fournier G."/>
            <person name="Mayhew G.F."/>
            <person name="Plunkett G. III"/>
            <person name="Rose D.J."/>
            <person name="Darling A."/>
            <person name="Mau B."/>
            <person name="Perna N.T."/>
            <person name="Payne S.M."/>
            <person name="Runyen-Janecky L.J."/>
            <person name="Zhou S."/>
            <person name="Schwartz D.C."/>
            <person name="Blattner F.R."/>
        </authorList>
    </citation>
    <scope>NUCLEOTIDE SEQUENCE [LARGE SCALE GENOMIC DNA]</scope>
    <source>
        <strain>ATCC 700930 / 2457T / Serotype 2a</strain>
    </source>
</reference>
<organism>
    <name type="scientific">Shigella flexneri</name>
    <dbReference type="NCBI Taxonomy" id="623"/>
    <lineage>
        <taxon>Bacteria</taxon>
        <taxon>Pseudomonadati</taxon>
        <taxon>Pseudomonadota</taxon>
        <taxon>Gammaproteobacteria</taxon>
        <taxon>Enterobacterales</taxon>
        <taxon>Enterobacteriaceae</taxon>
        <taxon>Shigella</taxon>
    </lineage>
</organism>
<dbReference type="EC" id="4.2.1.-" evidence="1"/>
<dbReference type="EMBL" id="AE005674">
    <property type="protein sequence ID" value="AAN44714.2"/>
    <property type="molecule type" value="Genomic_DNA"/>
</dbReference>
<dbReference type="EMBL" id="AE014073">
    <property type="protein sequence ID" value="AAP18528.1"/>
    <property type="molecule type" value="Genomic_DNA"/>
</dbReference>
<dbReference type="RefSeq" id="WP_001300411.1">
    <property type="nucleotide sequence ID" value="NZ_WPGW01000004.1"/>
</dbReference>
<dbReference type="SMR" id="P0ABU6"/>
<dbReference type="STRING" id="198214.SF3249"/>
<dbReference type="MEROPS" id="C56.975"/>
<dbReference type="PaxDb" id="198214-SF3249"/>
<dbReference type="KEGG" id="sfl:SF3249"/>
<dbReference type="KEGG" id="sfx:S3467"/>
<dbReference type="PATRIC" id="fig|198214.7.peg.3851"/>
<dbReference type="HOGENOM" id="CLU_072952_1_0_6"/>
<dbReference type="Proteomes" id="UP000001006">
    <property type="component" value="Chromosome"/>
</dbReference>
<dbReference type="Proteomes" id="UP000002673">
    <property type="component" value="Chromosome"/>
</dbReference>
<dbReference type="GO" id="GO:0016829">
    <property type="term" value="F:lyase activity"/>
    <property type="evidence" value="ECO:0007669"/>
    <property type="project" value="UniProtKB-KW"/>
</dbReference>
<dbReference type="CDD" id="cd03133">
    <property type="entry name" value="GATase1_ES1"/>
    <property type="match status" value="1"/>
</dbReference>
<dbReference type="FunFam" id="3.40.50.880:FF:000032">
    <property type="entry name" value="Glyoxalase"/>
    <property type="match status" value="1"/>
</dbReference>
<dbReference type="Gene3D" id="3.40.50.880">
    <property type="match status" value="1"/>
</dbReference>
<dbReference type="InterPro" id="IPR029062">
    <property type="entry name" value="Class_I_gatase-like"/>
</dbReference>
<dbReference type="InterPro" id="IPR026041">
    <property type="entry name" value="ElbB"/>
</dbReference>
<dbReference type="NCBIfam" id="NF008747">
    <property type="entry name" value="PRK11780.1"/>
    <property type="match status" value="1"/>
</dbReference>
<dbReference type="PANTHER" id="PTHR10224">
    <property type="entry name" value="ES1 PROTEIN HOMOLOG, MITOCHONDRIAL"/>
    <property type="match status" value="1"/>
</dbReference>
<dbReference type="PANTHER" id="PTHR10224:SF12">
    <property type="entry name" value="GLYOXALASE ELBB"/>
    <property type="match status" value="1"/>
</dbReference>
<dbReference type="PIRSF" id="PIRSF006320">
    <property type="entry name" value="Elb2"/>
    <property type="match status" value="1"/>
</dbReference>
<dbReference type="SUPFAM" id="SSF52317">
    <property type="entry name" value="Class I glutamine amidotransferase-like"/>
    <property type="match status" value="1"/>
</dbReference>
<keyword id="KW-0456">Lyase</keyword>
<keyword id="KW-1185">Reference proteome</keyword>